<name>LIGB_ECOK1</name>
<accession>A1AHH8</accession>
<proteinExistence type="inferred from homology"/>
<gene>
    <name evidence="1" type="primary">ligB</name>
    <name type="ordered locus">Ecok1_36240</name>
    <name type="ORF">APECO1_2814</name>
</gene>
<evidence type="ECO:0000255" key="1">
    <source>
        <dbReference type="HAMAP-Rule" id="MF_01587"/>
    </source>
</evidence>
<evidence type="ECO:0000305" key="2"/>
<organism>
    <name type="scientific">Escherichia coli O1:K1 / APEC</name>
    <dbReference type="NCBI Taxonomy" id="405955"/>
    <lineage>
        <taxon>Bacteria</taxon>
        <taxon>Pseudomonadati</taxon>
        <taxon>Pseudomonadota</taxon>
        <taxon>Gammaproteobacteria</taxon>
        <taxon>Enterobacterales</taxon>
        <taxon>Enterobacteriaceae</taxon>
        <taxon>Escherichia</taxon>
    </lineage>
</organism>
<dbReference type="EC" id="6.5.1.2" evidence="1"/>
<dbReference type="EMBL" id="CP000468">
    <property type="protein sequence ID" value="ABJ03118.1"/>
    <property type="status" value="ALT_INIT"/>
    <property type="molecule type" value="Genomic_DNA"/>
</dbReference>
<dbReference type="RefSeq" id="WP_001363072.1">
    <property type="nucleotide sequence ID" value="NZ_CADILS010000011.1"/>
</dbReference>
<dbReference type="SMR" id="A1AHH8"/>
<dbReference type="KEGG" id="ecv:APECO1_2814"/>
<dbReference type="HOGENOM" id="CLU_489786_0_0_6"/>
<dbReference type="Proteomes" id="UP000008216">
    <property type="component" value="Chromosome"/>
</dbReference>
<dbReference type="GO" id="GO:0003911">
    <property type="term" value="F:DNA ligase (NAD+) activity"/>
    <property type="evidence" value="ECO:0007669"/>
    <property type="project" value="UniProtKB-UniRule"/>
</dbReference>
<dbReference type="GO" id="GO:0006281">
    <property type="term" value="P:DNA repair"/>
    <property type="evidence" value="ECO:0007669"/>
    <property type="project" value="UniProtKB-KW"/>
</dbReference>
<dbReference type="GO" id="GO:0006260">
    <property type="term" value="P:DNA replication"/>
    <property type="evidence" value="ECO:0007669"/>
    <property type="project" value="UniProtKB-KW"/>
</dbReference>
<dbReference type="FunFam" id="1.10.287.610:FF:000003">
    <property type="entry name" value="DNA ligase B"/>
    <property type="match status" value="1"/>
</dbReference>
<dbReference type="FunFam" id="2.40.50.140:FF:000139">
    <property type="entry name" value="DNA ligase B"/>
    <property type="match status" value="1"/>
</dbReference>
<dbReference type="FunFam" id="3.30.470.30:FF:000007">
    <property type="entry name" value="DNA ligase B"/>
    <property type="match status" value="1"/>
</dbReference>
<dbReference type="Gene3D" id="3.30.470.30">
    <property type="entry name" value="DNA ligase/mRNA capping enzyme"/>
    <property type="match status" value="1"/>
</dbReference>
<dbReference type="Gene3D" id="1.10.287.610">
    <property type="entry name" value="Helix hairpin bin"/>
    <property type="match status" value="1"/>
</dbReference>
<dbReference type="Gene3D" id="2.40.50.140">
    <property type="entry name" value="Nucleic acid-binding proteins"/>
    <property type="match status" value="1"/>
</dbReference>
<dbReference type="HAMAP" id="MF_01587">
    <property type="entry name" value="DNA_ligase_B"/>
    <property type="match status" value="1"/>
</dbReference>
<dbReference type="InterPro" id="IPR018239">
    <property type="entry name" value="DNA_ligase_AS"/>
</dbReference>
<dbReference type="InterPro" id="IPR020923">
    <property type="entry name" value="DNA_ligase_B"/>
</dbReference>
<dbReference type="InterPro" id="IPR033136">
    <property type="entry name" value="DNA_ligase_CS"/>
</dbReference>
<dbReference type="InterPro" id="IPR013839">
    <property type="entry name" value="DNAligase_adenylation"/>
</dbReference>
<dbReference type="InterPro" id="IPR013840">
    <property type="entry name" value="DNAligase_N"/>
</dbReference>
<dbReference type="InterPro" id="IPR012340">
    <property type="entry name" value="NA-bd_OB-fold"/>
</dbReference>
<dbReference type="InterPro" id="IPR050326">
    <property type="entry name" value="NAD_dep_DNA_ligaseB"/>
</dbReference>
<dbReference type="InterPro" id="IPR004150">
    <property type="entry name" value="NAD_DNA_ligase_OB"/>
</dbReference>
<dbReference type="InterPro" id="IPR010994">
    <property type="entry name" value="RuvA_2-like"/>
</dbReference>
<dbReference type="NCBIfam" id="NF005987">
    <property type="entry name" value="PRK08097.1"/>
    <property type="match status" value="1"/>
</dbReference>
<dbReference type="PANTHER" id="PTHR47810">
    <property type="entry name" value="DNA LIGASE"/>
    <property type="match status" value="1"/>
</dbReference>
<dbReference type="PANTHER" id="PTHR47810:SF1">
    <property type="entry name" value="DNA LIGASE B"/>
    <property type="match status" value="1"/>
</dbReference>
<dbReference type="Pfam" id="PF01653">
    <property type="entry name" value="DNA_ligase_aden"/>
    <property type="match status" value="1"/>
</dbReference>
<dbReference type="Pfam" id="PF03120">
    <property type="entry name" value="DNA_ligase_OB"/>
    <property type="match status" value="1"/>
</dbReference>
<dbReference type="SMART" id="SM00532">
    <property type="entry name" value="LIGANc"/>
    <property type="match status" value="1"/>
</dbReference>
<dbReference type="SUPFAM" id="SSF56091">
    <property type="entry name" value="DNA ligase/mRNA capping enzyme, catalytic domain"/>
    <property type="match status" value="1"/>
</dbReference>
<dbReference type="SUPFAM" id="SSF50249">
    <property type="entry name" value="Nucleic acid-binding proteins"/>
    <property type="match status" value="1"/>
</dbReference>
<dbReference type="SUPFAM" id="SSF47781">
    <property type="entry name" value="RuvA domain 2-like"/>
    <property type="match status" value="1"/>
</dbReference>
<dbReference type="PROSITE" id="PS01055">
    <property type="entry name" value="DNA_LIGASE_N1"/>
    <property type="match status" value="1"/>
</dbReference>
<dbReference type="PROSITE" id="PS01056">
    <property type="entry name" value="DNA_LIGASE_N2"/>
    <property type="match status" value="1"/>
</dbReference>
<feature type="chain" id="PRO_0000313539" description="DNA ligase B">
    <location>
        <begin position="1"/>
        <end position="560"/>
    </location>
</feature>
<feature type="active site" description="N6-AMP-lysine intermediate" evidence="1">
    <location>
        <position position="124"/>
    </location>
</feature>
<reference key="1">
    <citation type="journal article" date="2007" name="J. Bacteriol.">
        <title>The genome sequence of avian pathogenic Escherichia coli strain O1:K1:H7 shares strong similarities with human extraintestinal pathogenic E. coli genomes.</title>
        <authorList>
            <person name="Johnson T.J."/>
            <person name="Kariyawasam S."/>
            <person name="Wannemuehler Y."/>
            <person name="Mangiamele P."/>
            <person name="Johnson S.J."/>
            <person name="Doetkott C."/>
            <person name="Skyberg J.A."/>
            <person name="Lynne A.M."/>
            <person name="Johnson J.R."/>
            <person name="Nolan L.K."/>
        </authorList>
    </citation>
    <scope>NUCLEOTIDE SEQUENCE [LARGE SCALE GENOMIC DNA]</scope>
</reference>
<comment type="function">
    <text evidence="1">Catalyzes the formation of phosphodiester linkages between 5'-phosphoryl and 3'-hydroxyl groups in double-stranded DNA using NAD as a coenzyme and as the energy source for the reaction.</text>
</comment>
<comment type="catalytic activity">
    <reaction evidence="1">
        <text>NAD(+) + (deoxyribonucleotide)n-3'-hydroxyl + 5'-phospho-(deoxyribonucleotide)m = (deoxyribonucleotide)n+m + AMP + beta-nicotinamide D-nucleotide.</text>
        <dbReference type="EC" id="6.5.1.2"/>
    </reaction>
</comment>
<comment type="similarity">
    <text evidence="1">Belongs to the NAD-dependent DNA ligase family. LigB subfamily.</text>
</comment>
<comment type="sequence caution" evidence="2">
    <conflict type="erroneous initiation">
        <sequence resource="EMBL-CDS" id="ABJ03118"/>
    </conflict>
</comment>
<sequence length="560" mass="63228">MKVWMAILISILCWQSSAWAVCPAWSPARAQEEISRLQQQIKQWDDDYWKEGKSEVEDGVYDQLSARLTQWQRCFGNETRDVMMPPLNGAVMHPVAHTGVRKMADKNALSLWMRERSDLWVQPKVDGVAVTLVYRDGKLNKAISRGNGLKGEDWTQKVRLISAVPQTVSGPLANSTLQGEIFLQREGHIQQQMGGINARAKVAGLMMRQGNSDTLNSLAVFVWAWPDGPHLMTDRLKDLATAGFTLTQTYTRAVKNADEVAHVRNEWWKAKLPFVTDGVVVRAAKEPESRHWLPGQAEWLVAWKYQPVAQVAEVKAIQFAVGKSGKISVVASLAPVMLDDKKVQRVNIGSVRRWQEWDIAPGDQILVSLAGQGIPRIDDVVWRGAERTKPTPPENRFNSLTCYFASDVCQEQFISRLVWLGSKQVLGLDGIGEAGWRALHQTHRFEHIFSWLLLTPEQLQNTPGIAKSKSAQLWHQFNLARQQPFTRWVMAMGIPLTRAALNASDERSWSQLLFSTEQFWQQQPGTGSGRARQVIEWKENAQIKKLGSWLAAQQITGFEP</sequence>
<protein>
    <recommendedName>
        <fullName evidence="1">DNA ligase B</fullName>
        <ecNumber evidence="1">6.5.1.2</ecNumber>
    </recommendedName>
    <alternativeName>
        <fullName evidence="1">Polydeoxyribonucleotide synthase [NAD(+)] B</fullName>
    </alternativeName>
</protein>
<keyword id="KW-0227">DNA damage</keyword>
<keyword id="KW-0234">DNA repair</keyword>
<keyword id="KW-0235">DNA replication</keyword>
<keyword id="KW-0436">Ligase</keyword>
<keyword id="KW-0520">NAD</keyword>
<keyword id="KW-1185">Reference proteome</keyword>